<evidence type="ECO:0000255" key="1">
    <source>
        <dbReference type="HAMAP-Rule" id="MF_00244"/>
    </source>
</evidence>
<protein>
    <recommendedName>
        <fullName evidence="1">Probable nicotinate-nucleotide adenylyltransferase</fullName>
        <ecNumber evidence="1">2.7.7.18</ecNumber>
    </recommendedName>
    <alternativeName>
        <fullName evidence="1">Deamido-NAD(+) diphosphorylase</fullName>
    </alternativeName>
    <alternativeName>
        <fullName evidence="1">Deamido-NAD(+) pyrophosphorylase</fullName>
    </alternativeName>
    <alternativeName>
        <fullName evidence="1">Nicotinate mononucleotide adenylyltransferase</fullName>
        <shortName evidence="1">NaMN adenylyltransferase</shortName>
    </alternativeName>
</protein>
<dbReference type="EC" id="2.7.7.18" evidence="1"/>
<dbReference type="EMBL" id="BA000033">
    <property type="protein sequence ID" value="BAB95410.1"/>
    <property type="molecule type" value="Genomic_DNA"/>
</dbReference>
<dbReference type="RefSeq" id="WP_000725167.1">
    <property type="nucleotide sequence ID" value="NC_003923.1"/>
</dbReference>
<dbReference type="SMR" id="P65503"/>
<dbReference type="KEGG" id="sam:MW1545"/>
<dbReference type="HOGENOM" id="CLU_069765_3_1_9"/>
<dbReference type="UniPathway" id="UPA00253">
    <property type="reaction ID" value="UER00332"/>
</dbReference>
<dbReference type="GO" id="GO:0005524">
    <property type="term" value="F:ATP binding"/>
    <property type="evidence" value="ECO:0007669"/>
    <property type="project" value="UniProtKB-KW"/>
</dbReference>
<dbReference type="GO" id="GO:0004515">
    <property type="term" value="F:nicotinate-nucleotide adenylyltransferase activity"/>
    <property type="evidence" value="ECO:0007669"/>
    <property type="project" value="UniProtKB-UniRule"/>
</dbReference>
<dbReference type="GO" id="GO:0009435">
    <property type="term" value="P:NAD biosynthetic process"/>
    <property type="evidence" value="ECO:0007669"/>
    <property type="project" value="UniProtKB-UniRule"/>
</dbReference>
<dbReference type="CDD" id="cd02165">
    <property type="entry name" value="NMNAT"/>
    <property type="match status" value="1"/>
</dbReference>
<dbReference type="FunFam" id="3.40.50.620:FF:000189">
    <property type="entry name" value="Probable nicotinate-nucleotide adenylyltransferase"/>
    <property type="match status" value="1"/>
</dbReference>
<dbReference type="Gene3D" id="3.40.50.620">
    <property type="entry name" value="HUPs"/>
    <property type="match status" value="1"/>
</dbReference>
<dbReference type="HAMAP" id="MF_00244">
    <property type="entry name" value="NaMN_adenylyltr"/>
    <property type="match status" value="1"/>
</dbReference>
<dbReference type="InterPro" id="IPR004821">
    <property type="entry name" value="Cyt_trans-like"/>
</dbReference>
<dbReference type="InterPro" id="IPR005248">
    <property type="entry name" value="NadD/NMNAT"/>
</dbReference>
<dbReference type="InterPro" id="IPR014729">
    <property type="entry name" value="Rossmann-like_a/b/a_fold"/>
</dbReference>
<dbReference type="NCBIfam" id="TIGR00482">
    <property type="entry name" value="nicotinate (nicotinamide) nucleotide adenylyltransferase"/>
    <property type="match status" value="1"/>
</dbReference>
<dbReference type="NCBIfam" id="NF000840">
    <property type="entry name" value="PRK00071.1-3"/>
    <property type="match status" value="1"/>
</dbReference>
<dbReference type="NCBIfam" id="NF000841">
    <property type="entry name" value="PRK00071.1-4"/>
    <property type="match status" value="1"/>
</dbReference>
<dbReference type="PANTHER" id="PTHR39321">
    <property type="entry name" value="NICOTINATE-NUCLEOTIDE ADENYLYLTRANSFERASE-RELATED"/>
    <property type="match status" value="1"/>
</dbReference>
<dbReference type="PANTHER" id="PTHR39321:SF3">
    <property type="entry name" value="PHOSPHOPANTETHEINE ADENYLYLTRANSFERASE"/>
    <property type="match status" value="1"/>
</dbReference>
<dbReference type="Pfam" id="PF01467">
    <property type="entry name" value="CTP_transf_like"/>
    <property type="match status" value="1"/>
</dbReference>
<dbReference type="SUPFAM" id="SSF52374">
    <property type="entry name" value="Nucleotidylyl transferase"/>
    <property type="match status" value="1"/>
</dbReference>
<name>NADD_STAAW</name>
<gene>
    <name evidence="1" type="primary">nadD</name>
    <name type="ordered locus">MW1545</name>
</gene>
<comment type="function">
    <text evidence="1">Catalyzes the reversible adenylation of nicotinate mononucleotide (NaMN) to nicotinic acid adenine dinucleotide (NaAD).</text>
</comment>
<comment type="catalytic activity">
    <reaction evidence="1">
        <text>nicotinate beta-D-ribonucleotide + ATP + H(+) = deamido-NAD(+) + diphosphate</text>
        <dbReference type="Rhea" id="RHEA:22860"/>
        <dbReference type="ChEBI" id="CHEBI:15378"/>
        <dbReference type="ChEBI" id="CHEBI:30616"/>
        <dbReference type="ChEBI" id="CHEBI:33019"/>
        <dbReference type="ChEBI" id="CHEBI:57502"/>
        <dbReference type="ChEBI" id="CHEBI:58437"/>
        <dbReference type="EC" id="2.7.7.18"/>
    </reaction>
</comment>
<comment type="pathway">
    <text evidence="1">Cofactor biosynthesis; NAD(+) biosynthesis; deamido-NAD(+) from nicotinate D-ribonucleotide: step 1/1.</text>
</comment>
<comment type="similarity">
    <text evidence="1">Belongs to the NadD family.</text>
</comment>
<reference key="1">
    <citation type="journal article" date="2002" name="Lancet">
        <title>Genome and virulence determinants of high virulence community-acquired MRSA.</title>
        <authorList>
            <person name="Baba T."/>
            <person name="Takeuchi F."/>
            <person name="Kuroda M."/>
            <person name="Yuzawa H."/>
            <person name="Aoki K."/>
            <person name="Oguchi A."/>
            <person name="Nagai Y."/>
            <person name="Iwama N."/>
            <person name="Asano K."/>
            <person name="Naimi T."/>
            <person name="Kuroda H."/>
            <person name="Cui L."/>
            <person name="Yamamoto K."/>
            <person name="Hiramatsu K."/>
        </authorList>
    </citation>
    <scope>NUCLEOTIDE SEQUENCE [LARGE SCALE GENOMIC DNA]</scope>
    <source>
        <strain>MW2</strain>
    </source>
</reference>
<keyword id="KW-0067">ATP-binding</keyword>
<keyword id="KW-0520">NAD</keyword>
<keyword id="KW-0547">Nucleotide-binding</keyword>
<keyword id="KW-0548">Nucleotidyltransferase</keyword>
<keyword id="KW-0662">Pyridine nucleotide biosynthesis</keyword>
<keyword id="KW-0808">Transferase</keyword>
<proteinExistence type="inferred from homology"/>
<feature type="chain" id="PRO_0000181448" description="Probable nicotinate-nucleotide adenylyltransferase">
    <location>
        <begin position="1"/>
        <end position="189"/>
    </location>
</feature>
<accession>P65503</accession>
<accession>Q99TQ5</accession>
<sequence length="189" mass="22103">MKKIVLYGGQFNPIHTAHMIVASEVFHELQPDEFYFLPSFMSPLKKHNNFIDVQHRLTMIQMIIDELGFGDICDDEIKRGGQSYTYDTIKAFKEQHKDSELYFVIGTDQYNQLEKWYQIEYLKEMVTFVVVNRDKNSQNVENAMIAIQIPRVDISSTMIRQRVSEGKSIQVLVPKSVENYIKGEGLYEH</sequence>
<organism>
    <name type="scientific">Staphylococcus aureus (strain MW2)</name>
    <dbReference type="NCBI Taxonomy" id="196620"/>
    <lineage>
        <taxon>Bacteria</taxon>
        <taxon>Bacillati</taxon>
        <taxon>Bacillota</taxon>
        <taxon>Bacilli</taxon>
        <taxon>Bacillales</taxon>
        <taxon>Staphylococcaceae</taxon>
        <taxon>Staphylococcus</taxon>
    </lineage>
</organism>